<evidence type="ECO:0000256" key="1">
    <source>
        <dbReference type="SAM" id="MobiDB-lite"/>
    </source>
</evidence>
<evidence type="ECO:0000305" key="2"/>
<keyword id="KW-0025">Alternative splicing</keyword>
<keyword id="KW-1185">Reference proteome</keyword>
<accession>P34594</accession>
<accession>Q8I7F4</accession>
<organism>
    <name type="scientific">Caenorhabditis elegans</name>
    <dbReference type="NCBI Taxonomy" id="6239"/>
    <lineage>
        <taxon>Eukaryota</taxon>
        <taxon>Metazoa</taxon>
        <taxon>Ecdysozoa</taxon>
        <taxon>Nematoda</taxon>
        <taxon>Chromadorea</taxon>
        <taxon>Rhabditida</taxon>
        <taxon>Rhabditina</taxon>
        <taxon>Rhabditomorpha</taxon>
        <taxon>Rhabditoidea</taxon>
        <taxon>Rhabditidae</taxon>
        <taxon>Peloderinae</taxon>
        <taxon>Caenorhabditis</taxon>
    </lineage>
</organism>
<proteinExistence type="predicted"/>
<sequence length="233" mass="26825">MGKHTKFGSSDDEGETETSVAKRQKDEKKEKKKEKRDRSRSPHKERERSPKRDRHPEKNESRRHDDRDQERRRDYGRNDRRDDRRGDGSWKTDRNDRNDRRNDFQRRDDKNRLSAEEIAAQRKALWGNKKVAGESSSSNTTDTASSSSEPATGGKNEKLWSSAIAATGVDSSKANKFMRLMGVKNAPKPTDDSSRLSDEKNRQDKMLNDLEKQYAIARETTHMGRGTGFGFGH</sequence>
<name>YOD2_CAEEL</name>
<dbReference type="EMBL" id="FO081113">
    <property type="protein sequence ID" value="CCD69192.1"/>
    <property type="molecule type" value="Genomic_DNA"/>
</dbReference>
<dbReference type="EMBL" id="FO081113">
    <property type="protein sequence ID" value="CCD69193.1"/>
    <property type="molecule type" value="Genomic_DNA"/>
</dbReference>
<dbReference type="PIR" id="S44882">
    <property type="entry name" value="S44882"/>
</dbReference>
<dbReference type="RefSeq" id="NP_498836.1">
    <molecule id="P34594-1"/>
    <property type="nucleotide sequence ID" value="NM_066435.3"/>
</dbReference>
<dbReference type="RefSeq" id="NP_871698.1">
    <molecule id="P34594-2"/>
    <property type="nucleotide sequence ID" value="NM_181969.5"/>
</dbReference>
<dbReference type="FunCoup" id="P34594">
    <property type="interactions" value="98"/>
</dbReference>
<dbReference type="STRING" id="6239.ZC262.2a.1"/>
<dbReference type="iPTMnet" id="P34594"/>
<dbReference type="PaxDb" id="6239-ZC262.2a"/>
<dbReference type="PeptideAtlas" id="P34594"/>
<dbReference type="EnsemblMetazoa" id="ZC262.2a.1">
    <molecule id="P34594-1"/>
    <property type="protein sequence ID" value="ZC262.2a.1"/>
    <property type="gene ID" value="WBGene00022579"/>
</dbReference>
<dbReference type="EnsemblMetazoa" id="ZC262.2a.2">
    <molecule id="P34594-1"/>
    <property type="protein sequence ID" value="ZC262.2a.2"/>
    <property type="gene ID" value="WBGene00022579"/>
</dbReference>
<dbReference type="EnsemblMetazoa" id="ZC262.2b.1">
    <molecule id="P34594-2"/>
    <property type="protein sequence ID" value="ZC262.2b.1"/>
    <property type="gene ID" value="WBGene00022579"/>
</dbReference>
<dbReference type="EnsemblMetazoa" id="ZC262.2b.2">
    <molecule id="P34594-2"/>
    <property type="protein sequence ID" value="ZC262.2b.2"/>
    <property type="gene ID" value="WBGene00022579"/>
</dbReference>
<dbReference type="EnsemblMetazoa" id="ZC262.2b.3">
    <molecule id="P34594-2"/>
    <property type="protein sequence ID" value="ZC262.2b.3"/>
    <property type="gene ID" value="WBGene00022579"/>
</dbReference>
<dbReference type="EnsemblMetazoa" id="ZC262.2b.4">
    <molecule id="P34594-2"/>
    <property type="protein sequence ID" value="ZC262.2b.4"/>
    <property type="gene ID" value="WBGene00022579"/>
</dbReference>
<dbReference type="EnsemblMetazoa" id="ZC262.2b.5">
    <molecule id="P34594-2"/>
    <property type="protein sequence ID" value="ZC262.2b.5"/>
    <property type="gene ID" value="WBGene00022579"/>
</dbReference>
<dbReference type="GeneID" id="191130"/>
<dbReference type="KEGG" id="cel:CELE_ZC262.2"/>
<dbReference type="UCSC" id="ZC262.2b">
    <molecule id="P34594-1"/>
    <property type="organism name" value="c. elegans"/>
</dbReference>
<dbReference type="AGR" id="WB:WBGene00022579"/>
<dbReference type="CTD" id="191130"/>
<dbReference type="WormBase" id="ZC262.2a">
    <molecule id="P34594-1"/>
    <property type="protein sequence ID" value="CE00350"/>
    <property type="gene ID" value="WBGene00022579"/>
</dbReference>
<dbReference type="WormBase" id="ZC262.2b">
    <molecule id="P34594-2"/>
    <property type="protein sequence ID" value="CE33010"/>
    <property type="gene ID" value="WBGene00022579"/>
</dbReference>
<dbReference type="eggNOG" id="ENOG502SE6Y">
    <property type="taxonomic scope" value="Eukaryota"/>
</dbReference>
<dbReference type="HOGENOM" id="CLU_1125377_0_0_1"/>
<dbReference type="InParanoid" id="P34594"/>
<dbReference type="OMA" id="MGKHTKF"/>
<dbReference type="OrthoDB" id="1928974at2759"/>
<dbReference type="PRO" id="PR:P34594"/>
<dbReference type="Proteomes" id="UP000001940">
    <property type="component" value="Chromosome III"/>
</dbReference>
<dbReference type="Bgee" id="WBGene00022579">
    <property type="expression patterns" value="Expressed in embryo and 4 other cell types or tissues"/>
</dbReference>
<dbReference type="InterPro" id="IPR028124">
    <property type="entry name" value="SMAP_dom"/>
</dbReference>
<dbReference type="PANTHER" id="PTHR22426">
    <property type="entry name" value="ARGININE_SERINE-RICH COILED-COIL PROTEIN 2"/>
    <property type="match status" value="1"/>
</dbReference>
<dbReference type="PANTHER" id="PTHR22426:SF2">
    <property type="entry name" value="ARGININE_SERINE-RICH COILED-COIL PROTEIN 2"/>
    <property type="match status" value="1"/>
</dbReference>
<dbReference type="Pfam" id="PF15477">
    <property type="entry name" value="SMAP"/>
    <property type="match status" value="1"/>
</dbReference>
<protein>
    <recommendedName>
        <fullName>Uncharacterized protein ZC262.2</fullName>
    </recommendedName>
</protein>
<comment type="alternative products">
    <event type="alternative splicing"/>
    <isoform>
        <id>P34594-1</id>
        <name>a</name>
        <sequence type="displayed"/>
    </isoform>
    <isoform>
        <id>P34594-2</id>
        <name>b</name>
        <sequence type="described" ref="VSP_016452 VSP_016453"/>
    </isoform>
</comment>
<reference key="1">
    <citation type="journal article" date="1994" name="Nature">
        <title>2.2 Mb of contiguous nucleotide sequence from chromosome III of C. elegans.</title>
        <authorList>
            <person name="Wilson R."/>
            <person name="Ainscough R."/>
            <person name="Anderson K."/>
            <person name="Baynes C."/>
            <person name="Berks M."/>
            <person name="Bonfield J."/>
            <person name="Burton J."/>
            <person name="Connell M."/>
            <person name="Copsey T."/>
            <person name="Cooper J."/>
            <person name="Coulson A."/>
            <person name="Craxton M."/>
            <person name="Dear S."/>
            <person name="Du Z."/>
            <person name="Durbin R."/>
            <person name="Favello A."/>
            <person name="Fraser A."/>
            <person name="Fulton L."/>
            <person name="Gardner A."/>
            <person name="Green P."/>
            <person name="Hawkins T."/>
            <person name="Hillier L."/>
            <person name="Jier M."/>
            <person name="Johnston L."/>
            <person name="Jones M."/>
            <person name="Kershaw J."/>
            <person name="Kirsten J."/>
            <person name="Laisster N."/>
            <person name="Latreille P."/>
            <person name="Lightning J."/>
            <person name="Lloyd C."/>
            <person name="Mortimore B."/>
            <person name="O'Callaghan M."/>
            <person name="Parsons J."/>
            <person name="Percy C."/>
            <person name="Rifken L."/>
            <person name="Roopra A."/>
            <person name="Saunders D."/>
            <person name="Shownkeen R."/>
            <person name="Sims M."/>
            <person name="Smaldon N."/>
            <person name="Smith A."/>
            <person name="Smith M."/>
            <person name="Sonnhammer E."/>
            <person name="Staden R."/>
            <person name="Sulston J."/>
            <person name="Thierry-Mieg J."/>
            <person name="Thomas K."/>
            <person name="Vaudin M."/>
            <person name="Vaughan K."/>
            <person name="Waterston R."/>
            <person name="Watson A."/>
            <person name="Weinstock L."/>
            <person name="Wilkinson-Sproat J."/>
            <person name="Wohldman P."/>
        </authorList>
    </citation>
    <scope>NUCLEOTIDE SEQUENCE [LARGE SCALE GENOMIC DNA]</scope>
    <source>
        <strain>Bristol N2</strain>
    </source>
</reference>
<reference key="2">
    <citation type="journal article" date="1998" name="Science">
        <title>Genome sequence of the nematode C. elegans: a platform for investigating biology.</title>
        <authorList>
            <consortium name="The C. elegans sequencing consortium"/>
        </authorList>
    </citation>
    <scope>NUCLEOTIDE SEQUENCE [LARGE SCALE GENOMIC DNA]</scope>
    <scope>ALTERNATIVE SPLICING</scope>
    <source>
        <strain>Bristol N2</strain>
    </source>
</reference>
<feature type="chain" id="PRO_0000065497" description="Uncharacterized protein ZC262.2">
    <location>
        <begin position="1"/>
        <end position="233"/>
    </location>
</feature>
<feature type="region of interest" description="Disordered" evidence="1">
    <location>
        <begin position="1"/>
        <end position="159"/>
    </location>
</feature>
<feature type="region of interest" description="Disordered" evidence="1">
    <location>
        <begin position="181"/>
        <end position="206"/>
    </location>
</feature>
<feature type="compositionally biased region" description="Basic and acidic residues" evidence="1">
    <location>
        <begin position="36"/>
        <end position="115"/>
    </location>
</feature>
<feature type="compositionally biased region" description="Low complexity" evidence="1">
    <location>
        <begin position="135"/>
        <end position="148"/>
    </location>
</feature>
<feature type="compositionally biased region" description="Basic and acidic residues" evidence="1">
    <location>
        <begin position="189"/>
        <end position="206"/>
    </location>
</feature>
<feature type="splice variant" id="VSP_016452" description="In isoform b." evidence="2">
    <original>NESRR</original>
    <variation>FCLPM</variation>
    <location>
        <begin position="59"/>
        <end position="63"/>
    </location>
</feature>
<feature type="splice variant" id="VSP_016453" description="In isoform b." evidence="2">
    <location>
        <begin position="64"/>
        <end position="233"/>
    </location>
</feature>
<gene>
    <name type="ORF">ZC262.2</name>
</gene>